<organism>
    <name type="scientific">Mycolicibacterium paratuberculosis (strain ATCC BAA-968 / K-10)</name>
    <name type="common">Mycobacterium paratuberculosis</name>
    <dbReference type="NCBI Taxonomy" id="262316"/>
    <lineage>
        <taxon>Bacteria</taxon>
        <taxon>Bacillati</taxon>
        <taxon>Actinomycetota</taxon>
        <taxon>Actinomycetes</taxon>
        <taxon>Mycobacteriales</taxon>
        <taxon>Mycobacteriaceae</taxon>
        <taxon>Mycobacterium</taxon>
        <taxon>Mycobacterium avium complex (MAC)</taxon>
    </lineage>
</organism>
<proteinExistence type="inferred from homology"/>
<evidence type="ECO:0000255" key="1">
    <source>
        <dbReference type="HAMAP-Rule" id="MF_01121"/>
    </source>
</evidence>
<evidence type="ECO:0000255" key="2">
    <source>
        <dbReference type="PROSITE-ProRule" id="PRU00236"/>
    </source>
</evidence>
<protein>
    <recommendedName>
        <fullName evidence="1">NAD-dependent protein deacylase</fullName>
        <ecNumber evidence="1 2">2.3.1.286</ecNumber>
    </recommendedName>
    <alternativeName>
        <fullName evidence="1">Regulatory protein SIR2 homolog</fullName>
    </alternativeName>
</protein>
<comment type="function">
    <text evidence="1">NAD-dependent lysine deacetylase and desuccinylase that specifically removes acetyl and succinyl groups on target proteins. Modulates the activities of several proteins which are inactive in their acylated form.</text>
</comment>
<comment type="catalytic activity">
    <reaction evidence="1">
        <text>N(6)-acetyl-L-lysyl-[protein] + NAD(+) + H2O = 2''-O-acetyl-ADP-D-ribose + nicotinamide + L-lysyl-[protein]</text>
        <dbReference type="Rhea" id="RHEA:43636"/>
        <dbReference type="Rhea" id="RHEA-COMP:9752"/>
        <dbReference type="Rhea" id="RHEA-COMP:10731"/>
        <dbReference type="ChEBI" id="CHEBI:15377"/>
        <dbReference type="ChEBI" id="CHEBI:17154"/>
        <dbReference type="ChEBI" id="CHEBI:29969"/>
        <dbReference type="ChEBI" id="CHEBI:57540"/>
        <dbReference type="ChEBI" id="CHEBI:61930"/>
        <dbReference type="ChEBI" id="CHEBI:83767"/>
        <dbReference type="EC" id="2.3.1.286"/>
    </reaction>
</comment>
<comment type="catalytic activity">
    <reaction evidence="1">
        <text>N(6)-succinyl-L-lysyl-[protein] + NAD(+) + H2O = 2''-O-succinyl-ADP-D-ribose + nicotinamide + L-lysyl-[protein]</text>
        <dbReference type="Rhea" id="RHEA:47668"/>
        <dbReference type="Rhea" id="RHEA-COMP:9752"/>
        <dbReference type="Rhea" id="RHEA-COMP:11877"/>
        <dbReference type="ChEBI" id="CHEBI:15377"/>
        <dbReference type="ChEBI" id="CHEBI:17154"/>
        <dbReference type="ChEBI" id="CHEBI:29969"/>
        <dbReference type="ChEBI" id="CHEBI:57540"/>
        <dbReference type="ChEBI" id="CHEBI:87830"/>
        <dbReference type="ChEBI" id="CHEBI:87832"/>
    </reaction>
</comment>
<comment type="cofactor">
    <cofactor evidence="1">
        <name>Zn(2+)</name>
        <dbReference type="ChEBI" id="CHEBI:29105"/>
    </cofactor>
    <text evidence="1">Binds 1 zinc ion per subunit.</text>
</comment>
<comment type="subcellular location">
    <subcellularLocation>
        <location evidence="1">Cytoplasm</location>
    </subcellularLocation>
</comment>
<comment type="domain">
    <text evidence="1">2 residues (Tyr-53 and Arg-56) present in a large hydrophobic pocket are probably involved in substrate specificity. They are important for desuccinylation activity, but dispensable for deacetylation activity.</text>
</comment>
<comment type="similarity">
    <text evidence="1">Belongs to the sirtuin family. Class III subfamily.</text>
</comment>
<name>NPD_MYCPA</name>
<feature type="chain" id="PRO_0000110330" description="NAD-dependent protein deacylase">
    <location>
        <begin position="1"/>
        <end position="237"/>
    </location>
</feature>
<feature type="domain" description="Deacetylase sirtuin-type" evidence="2">
    <location>
        <begin position="1"/>
        <end position="235"/>
    </location>
</feature>
<feature type="active site" description="Proton acceptor" evidence="2">
    <location>
        <position position="104"/>
    </location>
</feature>
<feature type="binding site" evidence="1">
    <location>
        <begin position="8"/>
        <end position="28"/>
    </location>
    <ligand>
        <name>NAD(+)</name>
        <dbReference type="ChEBI" id="CHEBI:57540"/>
    </ligand>
</feature>
<feature type="binding site" evidence="1">
    <location>
        <position position="53"/>
    </location>
    <ligand>
        <name>substrate</name>
    </ligand>
</feature>
<feature type="binding site" evidence="1">
    <location>
        <position position="56"/>
    </location>
    <ligand>
        <name>substrate</name>
    </ligand>
</feature>
<feature type="binding site" evidence="1">
    <location>
        <begin position="86"/>
        <end position="89"/>
    </location>
    <ligand>
        <name>NAD(+)</name>
        <dbReference type="ChEBI" id="CHEBI:57540"/>
    </ligand>
</feature>
<feature type="binding site" evidence="1">
    <location>
        <position position="112"/>
    </location>
    <ligand>
        <name>Zn(2+)</name>
        <dbReference type="ChEBI" id="CHEBI:29105"/>
    </ligand>
</feature>
<feature type="binding site" evidence="1">
    <location>
        <position position="115"/>
    </location>
    <ligand>
        <name>Zn(2+)</name>
        <dbReference type="ChEBI" id="CHEBI:29105"/>
    </ligand>
</feature>
<feature type="binding site" evidence="1">
    <location>
        <position position="138"/>
    </location>
    <ligand>
        <name>Zn(2+)</name>
        <dbReference type="ChEBI" id="CHEBI:29105"/>
    </ligand>
</feature>
<feature type="binding site" evidence="1">
    <location>
        <position position="140"/>
    </location>
    <ligand>
        <name>Zn(2+)</name>
        <dbReference type="ChEBI" id="CHEBI:29105"/>
    </ligand>
</feature>
<feature type="binding site" evidence="1">
    <location>
        <begin position="177"/>
        <end position="179"/>
    </location>
    <ligand>
        <name>NAD(+)</name>
        <dbReference type="ChEBI" id="CHEBI:57540"/>
    </ligand>
</feature>
<feature type="binding site" evidence="1">
    <location>
        <begin position="203"/>
        <end position="205"/>
    </location>
    <ligand>
        <name>NAD(+)</name>
        <dbReference type="ChEBI" id="CHEBI:57540"/>
    </ligand>
</feature>
<feature type="binding site" evidence="1">
    <location>
        <position position="221"/>
    </location>
    <ligand>
        <name>NAD(+)</name>
        <dbReference type="ChEBI" id="CHEBI:57540"/>
    </ligand>
</feature>
<keyword id="KW-0963">Cytoplasm</keyword>
<keyword id="KW-0479">Metal-binding</keyword>
<keyword id="KW-0520">NAD</keyword>
<keyword id="KW-1185">Reference proteome</keyword>
<keyword id="KW-0808">Transferase</keyword>
<keyword id="KW-0862">Zinc</keyword>
<dbReference type="EC" id="2.3.1.286" evidence="1 2"/>
<dbReference type="EMBL" id="AE016958">
    <property type="protein sequence ID" value="AAS04950.1"/>
    <property type="molecule type" value="Genomic_DNA"/>
</dbReference>
<dbReference type="RefSeq" id="WP_003878503.1">
    <property type="nucleotide sequence ID" value="NZ_CP106873.1"/>
</dbReference>
<dbReference type="SMR" id="Q73WM7"/>
<dbReference type="STRING" id="262316.MAP_2633"/>
<dbReference type="KEGG" id="mpa:MAP_2633"/>
<dbReference type="eggNOG" id="COG0846">
    <property type="taxonomic scope" value="Bacteria"/>
</dbReference>
<dbReference type="HOGENOM" id="CLU_023643_3_1_11"/>
<dbReference type="Proteomes" id="UP000000580">
    <property type="component" value="Chromosome"/>
</dbReference>
<dbReference type="GO" id="GO:0005737">
    <property type="term" value="C:cytoplasm"/>
    <property type="evidence" value="ECO:0007669"/>
    <property type="project" value="UniProtKB-SubCell"/>
</dbReference>
<dbReference type="GO" id="GO:0017136">
    <property type="term" value="F:histone deacetylase activity, NAD-dependent"/>
    <property type="evidence" value="ECO:0007669"/>
    <property type="project" value="TreeGrafter"/>
</dbReference>
<dbReference type="GO" id="GO:0070403">
    <property type="term" value="F:NAD+ binding"/>
    <property type="evidence" value="ECO:0007669"/>
    <property type="project" value="UniProtKB-UniRule"/>
</dbReference>
<dbReference type="GO" id="GO:0036054">
    <property type="term" value="F:protein-malonyllysine demalonylase activity"/>
    <property type="evidence" value="ECO:0007669"/>
    <property type="project" value="InterPro"/>
</dbReference>
<dbReference type="GO" id="GO:0036055">
    <property type="term" value="F:protein-succinyllysine desuccinylase activity"/>
    <property type="evidence" value="ECO:0007669"/>
    <property type="project" value="UniProtKB-UniRule"/>
</dbReference>
<dbReference type="GO" id="GO:0008270">
    <property type="term" value="F:zinc ion binding"/>
    <property type="evidence" value="ECO:0007669"/>
    <property type="project" value="UniProtKB-UniRule"/>
</dbReference>
<dbReference type="CDD" id="cd01412">
    <property type="entry name" value="SIRT5_Af1_CobB"/>
    <property type="match status" value="1"/>
</dbReference>
<dbReference type="Gene3D" id="3.30.1600.10">
    <property type="entry name" value="SIR2/SIRT2 'Small Domain"/>
    <property type="match status" value="1"/>
</dbReference>
<dbReference type="Gene3D" id="3.40.50.1220">
    <property type="entry name" value="TPP-binding domain"/>
    <property type="match status" value="1"/>
</dbReference>
<dbReference type="HAMAP" id="MF_01121">
    <property type="entry name" value="Sirtuin_ClassIII"/>
    <property type="match status" value="1"/>
</dbReference>
<dbReference type="InterPro" id="IPR029035">
    <property type="entry name" value="DHS-like_NAD/FAD-binding_dom"/>
</dbReference>
<dbReference type="InterPro" id="IPR050134">
    <property type="entry name" value="NAD-dep_sirtuin_deacylases"/>
</dbReference>
<dbReference type="InterPro" id="IPR003000">
    <property type="entry name" value="Sirtuin"/>
</dbReference>
<dbReference type="InterPro" id="IPR026591">
    <property type="entry name" value="Sirtuin_cat_small_dom_sf"/>
</dbReference>
<dbReference type="InterPro" id="IPR027546">
    <property type="entry name" value="Sirtuin_class_III"/>
</dbReference>
<dbReference type="InterPro" id="IPR026590">
    <property type="entry name" value="Ssirtuin_cat_dom"/>
</dbReference>
<dbReference type="NCBIfam" id="NF001753">
    <property type="entry name" value="PRK00481.1-3"/>
    <property type="match status" value="1"/>
</dbReference>
<dbReference type="PANTHER" id="PTHR11085:SF4">
    <property type="entry name" value="NAD-DEPENDENT PROTEIN DEACYLASE"/>
    <property type="match status" value="1"/>
</dbReference>
<dbReference type="PANTHER" id="PTHR11085">
    <property type="entry name" value="NAD-DEPENDENT PROTEIN DEACYLASE SIRTUIN-5, MITOCHONDRIAL-RELATED"/>
    <property type="match status" value="1"/>
</dbReference>
<dbReference type="Pfam" id="PF02146">
    <property type="entry name" value="SIR2"/>
    <property type="match status" value="1"/>
</dbReference>
<dbReference type="SUPFAM" id="SSF52467">
    <property type="entry name" value="DHS-like NAD/FAD-binding domain"/>
    <property type="match status" value="1"/>
</dbReference>
<dbReference type="PROSITE" id="PS50305">
    <property type="entry name" value="SIRTUIN"/>
    <property type="match status" value="1"/>
</dbReference>
<sequence>MRIAVLSGAGISAESGVPTFRDDKNGLWARFDPYELSSTQGWRDNPQRVWGWYLWRHYLVADVAPNAGHRAIAAWQDHAEVSVITQNVDDLHERAGSRPVHHLHGSLFEFRCARCAKPYTGELPAMAEPALEVQPPVCGCGGLIRPDIVWFGEQLPDEPWRRAVEATESADVMVVVGTSAIVYPAAGLAELALSRGAAVVEVNPEVTPLSASATLSIRETASQALPGLLQRLPALLN</sequence>
<reference key="1">
    <citation type="journal article" date="2005" name="Proc. Natl. Acad. Sci. U.S.A.">
        <title>The complete genome sequence of Mycobacterium avium subspecies paratuberculosis.</title>
        <authorList>
            <person name="Li L."/>
            <person name="Bannantine J.P."/>
            <person name="Zhang Q."/>
            <person name="Amonsin A."/>
            <person name="May B.J."/>
            <person name="Alt D."/>
            <person name="Banerji N."/>
            <person name="Kanjilal S."/>
            <person name="Kapur V."/>
        </authorList>
    </citation>
    <scope>NUCLEOTIDE SEQUENCE [LARGE SCALE GENOMIC DNA]</scope>
    <source>
        <strain>ATCC BAA-968 / K-10</strain>
    </source>
</reference>
<accession>Q73WM7</accession>
<gene>
    <name evidence="1" type="primary">cobB</name>
    <name type="ordered locus">MAP_2633</name>
</gene>